<keyword id="KW-0997">Cell inner membrane</keyword>
<keyword id="KW-1003">Cell membrane</keyword>
<keyword id="KW-0445">Lipid transport</keyword>
<keyword id="KW-0472">Membrane</keyword>
<keyword id="KW-1185">Reference proteome</keyword>
<keyword id="KW-0812">Transmembrane</keyword>
<keyword id="KW-1133">Transmembrane helix</keyword>
<keyword id="KW-0813">Transport</keyword>
<comment type="function">
    <text evidence="1">Catalyzes the facilitated diffusion of 2-acyl-glycero-3-phosphoethanolamine (2-acyl-GPE) into the cell.</text>
</comment>
<comment type="subcellular location">
    <subcellularLocation>
        <location evidence="1">Cell inner membrane</location>
        <topology evidence="1">Multi-pass membrane protein</topology>
    </subcellularLocation>
</comment>
<comment type="similarity">
    <text evidence="1">Belongs to the major facilitator superfamily. LplT (TC 2.A.1.42) family.</text>
</comment>
<sequence>MPDSQSPNGSLFSRGMMAVIVAQFLSAFGDNALLFATLALLKQQFYPEWSQPVLQMVFVCAYILLAPFVGQVADSFSKGRVMMVANGLKLLGAVVIVFGGNPFVGYTLVGVGAAAYSPAKYGILGEITTGDRLVKANGLMESSTIAAILIGSMAGGMLADWHVGAALGVCALAYAGAVGANLLIPKLGAARPGQSWRFGPMTRSFFTACRTLWHNDETRFSLVGTSMFWGAGVTLRFLLVLWVPVALGITDNATPTYLNAMVAVGIVAGAGAAAKLVTLERVSRCMPAGILIGIAVIFFSLQQAALPAYLLLLLIGFFGGFFVVPLNALLQERGKRSVGAGNAIAVQNLGENTAMLLMLGLYSLAVKLSLPVVGIGVGFGAIFALAIAGLWLWRRKQ</sequence>
<accession>A7MR37</accession>
<gene>
    <name evidence="1" type="primary">lplT</name>
    <name type="ordered locus">ESA_00473</name>
</gene>
<name>LPLT_CROS8</name>
<feature type="chain" id="PRO_1000069311" description="Lysophospholipid transporter LplT">
    <location>
        <begin position="1"/>
        <end position="397"/>
    </location>
</feature>
<feature type="transmembrane region" description="Helical" evidence="1">
    <location>
        <begin position="16"/>
        <end position="36"/>
    </location>
</feature>
<feature type="transmembrane region" description="Helical" evidence="1">
    <location>
        <begin position="53"/>
        <end position="73"/>
    </location>
</feature>
<feature type="transmembrane region" description="Helical" evidence="1">
    <location>
        <begin position="91"/>
        <end position="111"/>
    </location>
</feature>
<feature type="transmembrane region" description="Helical" evidence="1">
    <location>
        <begin position="139"/>
        <end position="159"/>
    </location>
</feature>
<feature type="transmembrane region" description="Helical" evidence="1">
    <location>
        <begin position="164"/>
        <end position="184"/>
    </location>
</feature>
<feature type="transmembrane region" description="Helical" evidence="1">
    <location>
        <begin position="229"/>
        <end position="249"/>
    </location>
</feature>
<feature type="transmembrane region" description="Helical" evidence="1">
    <location>
        <begin position="257"/>
        <end position="277"/>
    </location>
</feature>
<feature type="transmembrane region" description="Helical" evidence="1">
    <location>
        <begin position="282"/>
        <end position="302"/>
    </location>
</feature>
<feature type="transmembrane region" description="Helical" evidence="1">
    <location>
        <begin position="304"/>
        <end position="324"/>
    </location>
</feature>
<feature type="transmembrane region" description="Helical" evidence="1">
    <location>
        <begin position="344"/>
        <end position="364"/>
    </location>
</feature>
<feature type="transmembrane region" description="Helical" evidence="1">
    <location>
        <begin position="372"/>
        <end position="392"/>
    </location>
</feature>
<protein>
    <recommendedName>
        <fullName evidence="1">Lysophospholipid transporter LplT</fullName>
    </recommendedName>
</protein>
<dbReference type="EMBL" id="CP000783">
    <property type="protein sequence ID" value="ABU75768.1"/>
    <property type="molecule type" value="Genomic_DNA"/>
</dbReference>
<dbReference type="RefSeq" id="WP_007894423.1">
    <property type="nucleotide sequence ID" value="NC_009778.1"/>
</dbReference>
<dbReference type="SMR" id="A7MR37"/>
<dbReference type="GeneID" id="56733423"/>
<dbReference type="KEGG" id="esa:ESA_00473"/>
<dbReference type="HOGENOM" id="CLU_047399_0_0_6"/>
<dbReference type="Proteomes" id="UP000000260">
    <property type="component" value="Chromosome"/>
</dbReference>
<dbReference type="GO" id="GO:0005886">
    <property type="term" value="C:plasma membrane"/>
    <property type="evidence" value="ECO:0007669"/>
    <property type="project" value="UniProtKB-SubCell"/>
</dbReference>
<dbReference type="GO" id="GO:0051978">
    <property type="term" value="F:lysophospholipid:sodium symporter activity"/>
    <property type="evidence" value="ECO:0007669"/>
    <property type="project" value="InterPro"/>
</dbReference>
<dbReference type="CDD" id="cd06173">
    <property type="entry name" value="MFS_MefA_like"/>
    <property type="match status" value="1"/>
</dbReference>
<dbReference type="Gene3D" id="1.20.1250.20">
    <property type="entry name" value="MFS general substrate transporter like domains"/>
    <property type="match status" value="1"/>
</dbReference>
<dbReference type="HAMAP" id="MF_01585">
    <property type="entry name" value="MFS_LplT"/>
    <property type="match status" value="1"/>
</dbReference>
<dbReference type="InterPro" id="IPR023727">
    <property type="entry name" value="LysoPLipid__transptr_LplT"/>
</dbReference>
<dbReference type="InterPro" id="IPR011701">
    <property type="entry name" value="MFS"/>
</dbReference>
<dbReference type="InterPro" id="IPR036259">
    <property type="entry name" value="MFS_trans_sf"/>
</dbReference>
<dbReference type="NCBIfam" id="NF008397">
    <property type="entry name" value="PRK11195.1"/>
    <property type="match status" value="1"/>
</dbReference>
<dbReference type="PANTHER" id="PTHR43266">
    <property type="entry name" value="MACROLIDE-EFFLUX PROTEIN"/>
    <property type="match status" value="1"/>
</dbReference>
<dbReference type="PANTHER" id="PTHR43266:SF2">
    <property type="entry name" value="MAJOR FACILITATOR SUPERFAMILY (MFS) PROFILE DOMAIN-CONTAINING PROTEIN"/>
    <property type="match status" value="1"/>
</dbReference>
<dbReference type="Pfam" id="PF07690">
    <property type="entry name" value="MFS_1"/>
    <property type="match status" value="1"/>
</dbReference>
<dbReference type="SUPFAM" id="SSF103473">
    <property type="entry name" value="MFS general substrate transporter"/>
    <property type="match status" value="1"/>
</dbReference>
<evidence type="ECO:0000255" key="1">
    <source>
        <dbReference type="HAMAP-Rule" id="MF_01585"/>
    </source>
</evidence>
<proteinExistence type="inferred from homology"/>
<organism>
    <name type="scientific">Cronobacter sakazakii (strain ATCC BAA-894)</name>
    <name type="common">Enterobacter sakazakii</name>
    <dbReference type="NCBI Taxonomy" id="290339"/>
    <lineage>
        <taxon>Bacteria</taxon>
        <taxon>Pseudomonadati</taxon>
        <taxon>Pseudomonadota</taxon>
        <taxon>Gammaproteobacteria</taxon>
        <taxon>Enterobacterales</taxon>
        <taxon>Enterobacteriaceae</taxon>
        <taxon>Cronobacter</taxon>
    </lineage>
</organism>
<reference key="1">
    <citation type="journal article" date="2010" name="PLoS ONE">
        <title>Genome sequence of Cronobacter sakazakii BAA-894 and comparative genomic hybridization analysis with other Cronobacter species.</title>
        <authorList>
            <person name="Kucerova E."/>
            <person name="Clifton S.W."/>
            <person name="Xia X.Q."/>
            <person name="Long F."/>
            <person name="Porwollik S."/>
            <person name="Fulton L."/>
            <person name="Fronick C."/>
            <person name="Minx P."/>
            <person name="Kyung K."/>
            <person name="Warren W."/>
            <person name="Fulton R."/>
            <person name="Feng D."/>
            <person name="Wollam A."/>
            <person name="Shah N."/>
            <person name="Bhonagiri V."/>
            <person name="Nash W.E."/>
            <person name="Hallsworth-Pepin K."/>
            <person name="Wilson R.K."/>
            <person name="McClelland M."/>
            <person name="Forsythe S.J."/>
        </authorList>
    </citation>
    <scope>NUCLEOTIDE SEQUENCE [LARGE SCALE GENOMIC DNA]</scope>
    <source>
        <strain>ATCC BAA-894</strain>
    </source>
</reference>